<proteinExistence type="inferred from homology"/>
<protein>
    <recommendedName>
        <fullName evidence="1">tRNA (guanine-N(1)-)-methyltransferase</fullName>
        <ecNumber evidence="1">2.1.1.228</ecNumber>
    </recommendedName>
    <alternativeName>
        <fullName evidence="1">M1G-methyltransferase</fullName>
    </alternativeName>
    <alternativeName>
        <fullName evidence="1">tRNA [GM37] methyltransferase</fullName>
    </alternativeName>
</protein>
<keyword id="KW-0963">Cytoplasm</keyword>
<keyword id="KW-0489">Methyltransferase</keyword>
<keyword id="KW-1185">Reference proteome</keyword>
<keyword id="KW-0949">S-adenosyl-L-methionine</keyword>
<keyword id="KW-0808">Transferase</keyword>
<keyword id="KW-0819">tRNA processing</keyword>
<dbReference type="EC" id="2.1.1.228" evidence="1"/>
<dbReference type="EMBL" id="CP000454">
    <property type="protein sequence ID" value="ABK03859.1"/>
    <property type="molecule type" value="Genomic_DNA"/>
</dbReference>
<dbReference type="RefSeq" id="WP_011692322.1">
    <property type="nucleotide sequence ID" value="NC_008541.1"/>
</dbReference>
<dbReference type="SMR" id="A0JXT9"/>
<dbReference type="STRING" id="290399.Arth_2480"/>
<dbReference type="KEGG" id="art:Arth_2480"/>
<dbReference type="eggNOG" id="COG0336">
    <property type="taxonomic scope" value="Bacteria"/>
</dbReference>
<dbReference type="HOGENOM" id="CLU_047363_0_0_11"/>
<dbReference type="OrthoDB" id="9807416at2"/>
<dbReference type="Proteomes" id="UP000000754">
    <property type="component" value="Chromosome"/>
</dbReference>
<dbReference type="GO" id="GO:0005829">
    <property type="term" value="C:cytosol"/>
    <property type="evidence" value="ECO:0007669"/>
    <property type="project" value="TreeGrafter"/>
</dbReference>
<dbReference type="GO" id="GO:0052906">
    <property type="term" value="F:tRNA (guanine(37)-N1)-methyltransferase activity"/>
    <property type="evidence" value="ECO:0007669"/>
    <property type="project" value="UniProtKB-UniRule"/>
</dbReference>
<dbReference type="GO" id="GO:0002939">
    <property type="term" value="P:tRNA N1-guanine methylation"/>
    <property type="evidence" value="ECO:0007669"/>
    <property type="project" value="TreeGrafter"/>
</dbReference>
<dbReference type="CDD" id="cd18080">
    <property type="entry name" value="TrmD-like"/>
    <property type="match status" value="1"/>
</dbReference>
<dbReference type="FunFam" id="1.10.1270.20:FF:000002">
    <property type="entry name" value="tRNA (guanine-N(1)-)-methyltransferase"/>
    <property type="match status" value="1"/>
</dbReference>
<dbReference type="FunFam" id="3.40.1280.10:FF:000001">
    <property type="entry name" value="tRNA (guanine-N(1)-)-methyltransferase"/>
    <property type="match status" value="1"/>
</dbReference>
<dbReference type="Gene3D" id="3.40.1280.10">
    <property type="match status" value="1"/>
</dbReference>
<dbReference type="Gene3D" id="1.10.1270.20">
    <property type="entry name" value="tRNA(m1g37)methyltransferase, domain 2"/>
    <property type="match status" value="1"/>
</dbReference>
<dbReference type="HAMAP" id="MF_00605">
    <property type="entry name" value="TrmD"/>
    <property type="match status" value="1"/>
</dbReference>
<dbReference type="InterPro" id="IPR029028">
    <property type="entry name" value="Alpha/beta_knot_MTases"/>
</dbReference>
<dbReference type="InterPro" id="IPR023148">
    <property type="entry name" value="tRNA_m1G_MeTrfase_C_sf"/>
</dbReference>
<dbReference type="InterPro" id="IPR002649">
    <property type="entry name" value="tRNA_m1G_MeTrfase_TrmD"/>
</dbReference>
<dbReference type="InterPro" id="IPR029026">
    <property type="entry name" value="tRNA_m1G_MTases_N"/>
</dbReference>
<dbReference type="InterPro" id="IPR016009">
    <property type="entry name" value="tRNA_MeTrfase_TRMD/TRM10"/>
</dbReference>
<dbReference type="NCBIfam" id="NF000648">
    <property type="entry name" value="PRK00026.1"/>
    <property type="match status" value="1"/>
</dbReference>
<dbReference type="NCBIfam" id="TIGR00088">
    <property type="entry name" value="trmD"/>
    <property type="match status" value="1"/>
</dbReference>
<dbReference type="PANTHER" id="PTHR46417">
    <property type="entry name" value="TRNA (GUANINE-N(1)-)-METHYLTRANSFERASE"/>
    <property type="match status" value="1"/>
</dbReference>
<dbReference type="PANTHER" id="PTHR46417:SF1">
    <property type="entry name" value="TRNA (GUANINE-N(1)-)-METHYLTRANSFERASE"/>
    <property type="match status" value="1"/>
</dbReference>
<dbReference type="Pfam" id="PF01746">
    <property type="entry name" value="tRNA_m1G_MT"/>
    <property type="match status" value="1"/>
</dbReference>
<dbReference type="PIRSF" id="PIRSF000386">
    <property type="entry name" value="tRNA_mtase"/>
    <property type="match status" value="1"/>
</dbReference>
<dbReference type="SUPFAM" id="SSF75217">
    <property type="entry name" value="alpha/beta knot"/>
    <property type="match status" value="1"/>
</dbReference>
<feature type="chain" id="PRO_1000006448" description="tRNA (guanine-N(1)-)-methyltransferase">
    <location>
        <begin position="1"/>
        <end position="274"/>
    </location>
</feature>
<feature type="binding site" evidence="1">
    <location>
        <position position="116"/>
    </location>
    <ligand>
        <name>S-adenosyl-L-methionine</name>
        <dbReference type="ChEBI" id="CHEBI:59789"/>
    </ligand>
</feature>
<feature type="binding site" evidence="1">
    <location>
        <begin position="140"/>
        <end position="145"/>
    </location>
    <ligand>
        <name>S-adenosyl-L-methionine</name>
        <dbReference type="ChEBI" id="CHEBI:59789"/>
    </ligand>
</feature>
<name>TRMD_ARTS2</name>
<comment type="function">
    <text evidence="1">Specifically methylates guanosine-37 in various tRNAs.</text>
</comment>
<comment type="catalytic activity">
    <reaction evidence="1">
        <text>guanosine(37) in tRNA + S-adenosyl-L-methionine = N(1)-methylguanosine(37) in tRNA + S-adenosyl-L-homocysteine + H(+)</text>
        <dbReference type="Rhea" id="RHEA:36899"/>
        <dbReference type="Rhea" id="RHEA-COMP:10145"/>
        <dbReference type="Rhea" id="RHEA-COMP:10147"/>
        <dbReference type="ChEBI" id="CHEBI:15378"/>
        <dbReference type="ChEBI" id="CHEBI:57856"/>
        <dbReference type="ChEBI" id="CHEBI:59789"/>
        <dbReference type="ChEBI" id="CHEBI:73542"/>
        <dbReference type="ChEBI" id="CHEBI:74269"/>
        <dbReference type="EC" id="2.1.1.228"/>
    </reaction>
</comment>
<comment type="subunit">
    <text evidence="1">Homodimer.</text>
</comment>
<comment type="subcellular location">
    <subcellularLocation>
        <location evidence="1">Cytoplasm</location>
    </subcellularLocation>
</comment>
<comment type="similarity">
    <text evidence="1">Belongs to the RNA methyltransferase TrmD family.</text>
</comment>
<reference key="1">
    <citation type="journal article" date="2013" name="Stand. Genomic Sci.">
        <title>Complete genome sequence of Arthrobacter sp. strain FB24.</title>
        <authorList>
            <person name="Nakatsu C.H."/>
            <person name="Barabote R."/>
            <person name="Thompson S."/>
            <person name="Bruce D."/>
            <person name="Detter C."/>
            <person name="Brettin T."/>
            <person name="Han C."/>
            <person name="Beasley F."/>
            <person name="Chen W."/>
            <person name="Konopka A."/>
            <person name="Xie G."/>
        </authorList>
    </citation>
    <scope>NUCLEOTIDE SEQUENCE [LARGE SCALE GENOMIC DNA]</scope>
    <source>
        <strain>FB24</strain>
    </source>
</reference>
<evidence type="ECO:0000255" key="1">
    <source>
        <dbReference type="HAMAP-Rule" id="MF_00605"/>
    </source>
</evidence>
<organism>
    <name type="scientific">Arthrobacter sp. (strain FB24)</name>
    <dbReference type="NCBI Taxonomy" id="290399"/>
    <lineage>
        <taxon>Bacteria</taxon>
        <taxon>Bacillati</taxon>
        <taxon>Actinomycetota</taxon>
        <taxon>Actinomycetes</taxon>
        <taxon>Micrococcales</taxon>
        <taxon>Micrococcaceae</taxon>
        <taxon>Arthrobacter</taxon>
    </lineage>
</organism>
<sequence length="274" mass="30085">MRIDVVSIFPEYLAPLELSLIGKARQDGILDLNVHDLREFTTDKHRSVDDTPYGGGAGMVMKAEPWAQALSTVAAARAGDAARKPVLIVPSPAGERFTQALAHELAGEEQLVFACGRYEGIDERVIEWAEEHFTVRPMSLGDYVLNGGEVAVLAMTEAIVRLLPGVVGNPESLVEESHSDGLLEYPVYTKPSSWRDREVPPVLLSGNHGKIAQWRRHQQYRRTAQRRPDLLAEFDAGNLPRADRTALGDLGYDVVDGHLRHRPEEPGNGAPADG</sequence>
<accession>A0JXT9</accession>
<gene>
    <name evidence="1" type="primary">trmD</name>
    <name type="ordered locus">Arth_2480</name>
</gene>